<comment type="function">
    <text evidence="1">Cleaves both 3' and 5' ssDNA extremities of branched DNA structures.</text>
</comment>
<comment type="subcellular location">
    <subcellularLocation>
        <location evidence="1">Cytoplasm</location>
    </subcellularLocation>
</comment>
<comment type="similarity">
    <text evidence="1">Belongs to the NucS endonuclease family.</text>
</comment>
<evidence type="ECO:0000255" key="1">
    <source>
        <dbReference type="HAMAP-Rule" id="MF_00722"/>
    </source>
</evidence>
<organism>
    <name type="scientific">Mycobacteroides abscessus (strain ATCC 19977 / DSM 44196 / CCUG 20993 / CIP 104536 / JCM 13569 / NCTC 13031 / TMC 1543 / L948)</name>
    <name type="common">Mycobacterium abscessus</name>
    <dbReference type="NCBI Taxonomy" id="561007"/>
    <lineage>
        <taxon>Bacteria</taxon>
        <taxon>Bacillati</taxon>
        <taxon>Actinomycetota</taxon>
        <taxon>Actinomycetes</taxon>
        <taxon>Mycobacteriales</taxon>
        <taxon>Mycobacteriaceae</taxon>
        <taxon>Mycobacteroides</taxon>
        <taxon>Mycobacteroides abscessus</taxon>
    </lineage>
</organism>
<proteinExistence type="inferred from homology"/>
<name>NUCS_MYCA9</name>
<reference key="1">
    <citation type="journal article" date="2009" name="PLoS ONE">
        <title>Non mycobacterial virulence genes in the genome of the emerging pathogen Mycobacterium abscessus.</title>
        <authorList>
            <person name="Ripoll F."/>
            <person name="Pasek S."/>
            <person name="Schenowitz C."/>
            <person name="Dossat C."/>
            <person name="Barbe V."/>
            <person name="Rottman M."/>
            <person name="Macheras E."/>
            <person name="Heym B."/>
            <person name="Herrmann J.L."/>
            <person name="Daffe M."/>
            <person name="Brosch R."/>
            <person name="Risler J.L."/>
            <person name="Gaillard J.L."/>
        </authorList>
    </citation>
    <scope>NUCLEOTIDE SEQUENCE [LARGE SCALE GENOMIC DNA]</scope>
    <source>
        <strain>ATCC 19977 / DSM 44196 / CCUG 20993 / CIP 104536 / JCM 13569 / NCTC 13031 / TMC 1543 / L948</strain>
    </source>
</reference>
<accession>B1MLW9</accession>
<sequence length="232" mass="25523">MRLVVAQCTVNYVGRLTAHLPSAKRLLLIKADGSVSVHADDRAYKPLNWMSPPCWLTETEGEGGDDTSESGAPTVWVVENKAGEQLRITIESIEHDSAHELGVDPGLVKDGVEAHLQELLAEHVALLGDGYTLVRREYMTPIGPVDLLCRDADGATVAVEIKRRGEIDGVEQLTRYLELLNRDTTLAPVAGVFAAQQIKPQARTLAEDRGIRCLTLDYDAMRGMDSDEFRLF</sequence>
<dbReference type="EC" id="3.1.-.-" evidence="1"/>
<dbReference type="EMBL" id="CU458896">
    <property type="protein sequence ID" value="CAM61546.1"/>
    <property type="molecule type" value="Genomic_DNA"/>
</dbReference>
<dbReference type="RefSeq" id="WP_005059861.1">
    <property type="nucleotide sequence ID" value="NZ_MLCG01000002.1"/>
</dbReference>
<dbReference type="SMR" id="B1MLW9"/>
<dbReference type="GeneID" id="93378408"/>
<dbReference type="KEGG" id="mab:MAB_1460"/>
<dbReference type="Proteomes" id="UP000007137">
    <property type="component" value="Chromosome"/>
</dbReference>
<dbReference type="GO" id="GO:0005737">
    <property type="term" value="C:cytoplasm"/>
    <property type="evidence" value="ECO:0007669"/>
    <property type="project" value="UniProtKB-SubCell"/>
</dbReference>
<dbReference type="GO" id="GO:0003677">
    <property type="term" value="F:DNA binding"/>
    <property type="evidence" value="ECO:0007669"/>
    <property type="project" value="UniProtKB-KW"/>
</dbReference>
<dbReference type="GO" id="GO:0000014">
    <property type="term" value="F:single-stranded DNA endodeoxyribonuclease activity"/>
    <property type="evidence" value="ECO:0007669"/>
    <property type="project" value="UniProtKB-UniRule"/>
</dbReference>
<dbReference type="CDD" id="cd22341">
    <property type="entry name" value="NucS-like"/>
    <property type="match status" value="1"/>
</dbReference>
<dbReference type="Gene3D" id="2.70.180.20">
    <property type="match status" value="1"/>
</dbReference>
<dbReference type="Gene3D" id="3.40.1350.10">
    <property type="match status" value="1"/>
</dbReference>
<dbReference type="HAMAP" id="MF_00722">
    <property type="entry name" value="NucS"/>
    <property type="match status" value="1"/>
</dbReference>
<dbReference type="InterPro" id="IPR002793">
    <property type="entry name" value="Endonuclease_NucS"/>
</dbReference>
<dbReference type="InterPro" id="IPR048301">
    <property type="entry name" value="NucS_C"/>
</dbReference>
<dbReference type="InterPro" id="IPR048302">
    <property type="entry name" value="NucS_N"/>
</dbReference>
<dbReference type="InterPro" id="IPR049173">
    <property type="entry name" value="NucS_N_sf"/>
</dbReference>
<dbReference type="InterPro" id="IPR011335">
    <property type="entry name" value="Restrct_endonuc-II-like"/>
</dbReference>
<dbReference type="InterPro" id="IPR011856">
    <property type="entry name" value="tRNA_endonuc-like_dom_sf"/>
</dbReference>
<dbReference type="NCBIfam" id="NF002876">
    <property type="entry name" value="PRK03298.1"/>
    <property type="match status" value="1"/>
</dbReference>
<dbReference type="PANTHER" id="PTHR38814">
    <property type="entry name" value="ENDONUCLEASE NUCS"/>
    <property type="match status" value="1"/>
</dbReference>
<dbReference type="PANTHER" id="PTHR38814:SF1">
    <property type="entry name" value="ENDONUCLEASE NUCS"/>
    <property type="match status" value="1"/>
</dbReference>
<dbReference type="Pfam" id="PF01939">
    <property type="entry name" value="NucS_C"/>
    <property type="match status" value="1"/>
</dbReference>
<dbReference type="Pfam" id="PF21003">
    <property type="entry name" value="NucS_N"/>
    <property type="match status" value="1"/>
</dbReference>
<dbReference type="SUPFAM" id="SSF52980">
    <property type="entry name" value="Restriction endonuclease-like"/>
    <property type="match status" value="1"/>
</dbReference>
<feature type="chain" id="PRO_1000198201" description="Endonuclease NucS">
    <location>
        <begin position="1"/>
        <end position="232"/>
    </location>
</feature>
<keyword id="KW-0963">Cytoplasm</keyword>
<keyword id="KW-0238">DNA-binding</keyword>
<keyword id="KW-0255">Endonuclease</keyword>
<keyword id="KW-0378">Hydrolase</keyword>
<keyword id="KW-0540">Nuclease</keyword>
<keyword id="KW-1185">Reference proteome</keyword>
<gene>
    <name evidence="1" type="primary">nucS</name>
    <name type="ordered locus">MAB_1460</name>
</gene>
<protein>
    <recommendedName>
        <fullName evidence="1">Endonuclease NucS</fullName>
        <ecNumber evidence="1">3.1.-.-</ecNumber>
    </recommendedName>
</protein>